<proteinExistence type="inferred from homology"/>
<gene>
    <name evidence="1" type="primary">pyrG</name>
    <name type="ordered locus">ABSDF2034</name>
</gene>
<protein>
    <recommendedName>
        <fullName evidence="1">CTP synthase</fullName>
        <ecNumber evidence="1">6.3.4.2</ecNumber>
    </recommendedName>
    <alternativeName>
        <fullName evidence="1">Cytidine 5'-triphosphate synthase</fullName>
    </alternativeName>
    <alternativeName>
        <fullName evidence="1">Cytidine triphosphate synthetase</fullName>
        <shortName evidence="1">CTP synthetase</shortName>
        <shortName evidence="1">CTPS</shortName>
    </alternativeName>
    <alternativeName>
        <fullName evidence="1">UTP--ammonia ligase</fullName>
    </alternativeName>
</protein>
<reference key="1">
    <citation type="journal article" date="2008" name="PLoS ONE">
        <title>Comparative analysis of Acinetobacters: three genomes for three lifestyles.</title>
        <authorList>
            <person name="Vallenet D."/>
            <person name="Nordmann P."/>
            <person name="Barbe V."/>
            <person name="Poirel L."/>
            <person name="Mangenot S."/>
            <person name="Bataille E."/>
            <person name="Dossat C."/>
            <person name="Gas S."/>
            <person name="Kreimeyer A."/>
            <person name="Lenoble P."/>
            <person name="Oztas S."/>
            <person name="Poulain J."/>
            <person name="Segurens B."/>
            <person name="Robert C."/>
            <person name="Abergel C."/>
            <person name="Claverie J.-M."/>
            <person name="Raoult D."/>
            <person name="Medigue C."/>
            <person name="Weissenbach J."/>
            <person name="Cruveiller S."/>
        </authorList>
    </citation>
    <scope>NUCLEOTIDE SEQUENCE [LARGE SCALE GENOMIC DNA]</scope>
    <source>
        <strain>SDF</strain>
    </source>
</reference>
<organism>
    <name type="scientific">Acinetobacter baumannii (strain SDF)</name>
    <dbReference type="NCBI Taxonomy" id="509170"/>
    <lineage>
        <taxon>Bacteria</taxon>
        <taxon>Pseudomonadati</taxon>
        <taxon>Pseudomonadota</taxon>
        <taxon>Gammaproteobacteria</taxon>
        <taxon>Moraxellales</taxon>
        <taxon>Moraxellaceae</taxon>
        <taxon>Acinetobacter</taxon>
        <taxon>Acinetobacter calcoaceticus/baumannii complex</taxon>
    </lineage>
</organism>
<sequence>MTHFIFVTGGVVSSLGKGISAASVAALLEARGLKVTMVKMDPYINVDPGTMSPFQHGEVFVTEDGAETDLDLGYYERFLRRAKMTKLNNFTSGRVYQDVLNKERRGDYLGGTVQVIPHITDNIKERVLRAGEGYDVAIVEIGGTVGDIESLPFMESVRQLMVELGHKRTMLMHLTLLPYIKSAAELKTKPTQHSVKELLSIGIQPDILICRTEYDVDADTKRKIALFTNVEARAVVVCKDAKTIYQIPRGFYEQNVDDLICERFGFTDLPEADLTDWDNVVEALLNPEYTVRVAMVGKYVELPDAYKSVNEALLHAGIKNRVKVQIDYVNAEELESQDVSILKTADAILVPGGFGERGTEGKMKAIQYARENGIPFLGICLGMQLAVIEYARHVAGMPEASSTEFNRSTKYPLIGLITEWLDERGELQQRSLESDLGGTMRLGAQKSELVEGTKTREVYGKAEITERHRHRYEMNNRFIEAIEQAGMKISGYSSAQHLVETVEIPEHPWFIAVQFHPEFTSSPRDGHPLFASFIDAAKTQHQKSK</sequence>
<evidence type="ECO:0000255" key="1">
    <source>
        <dbReference type="HAMAP-Rule" id="MF_01227"/>
    </source>
</evidence>
<name>PYRG_ACIBS</name>
<comment type="function">
    <text evidence="1">Catalyzes the ATP-dependent amination of UTP to CTP with either L-glutamine or ammonia as the source of nitrogen. Regulates intracellular CTP levels through interactions with the four ribonucleotide triphosphates.</text>
</comment>
<comment type="catalytic activity">
    <reaction evidence="1">
        <text>UTP + L-glutamine + ATP + H2O = CTP + L-glutamate + ADP + phosphate + 2 H(+)</text>
        <dbReference type="Rhea" id="RHEA:26426"/>
        <dbReference type="ChEBI" id="CHEBI:15377"/>
        <dbReference type="ChEBI" id="CHEBI:15378"/>
        <dbReference type="ChEBI" id="CHEBI:29985"/>
        <dbReference type="ChEBI" id="CHEBI:30616"/>
        <dbReference type="ChEBI" id="CHEBI:37563"/>
        <dbReference type="ChEBI" id="CHEBI:43474"/>
        <dbReference type="ChEBI" id="CHEBI:46398"/>
        <dbReference type="ChEBI" id="CHEBI:58359"/>
        <dbReference type="ChEBI" id="CHEBI:456216"/>
        <dbReference type="EC" id="6.3.4.2"/>
    </reaction>
</comment>
<comment type="catalytic activity">
    <reaction evidence="1">
        <text>L-glutamine + H2O = L-glutamate + NH4(+)</text>
        <dbReference type="Rhea" id="RHEA:15889"/>
        <dbReference type="ChEBI" id="CHEBI:15377"/>
        <dbReference type="ChEBI" id="CHEBI:28938"/>
        <dbReference type="ChEBI" id="CHEBI:29985"/>
        <dbReference type="ChEBI" id="CHEBI:58359"/>
    </reaction>
</comment>
<comment type="catalytic activity">
    <reaction evidence="1">
        <text>UTP + NH4(+) + ATP = CTP + ADP + phosphate + 2 H(+)</text>
        <dbReference type="Rhea" id="RHEA:16597"/>
        <dbReference type="ChEBI" id="CHEBI:15378"/>
        <dbReference type="ChEBI" id="CHEBI:28938"/>
        <dbReference type="ChEBI" id="CHEBI:30616"/>
        <dbReference type="ChEBI" id="CHEBI:37563"/>
        <dbReference type="ChEBI" id="CHEBI:43474"/>
        <dbReference type="ChEBI" id="CHEBI:46398"/>
        <dbReference type="ChEBI" id="CHEBI:456216"/>
    </reaction>
</comment>
<comment type="activity regulation">
    <text evidence="1">Allosterically activated by GTP, when glutamine is the substrate; GTP has no effect on the reaction when ammonia is the substrate. The allosteric effector GTP functions by stabilizing the protein conformation that binds the tetrahedral intermediate(s) formed during glutamine hydrolysis. Inhibited by the product CTP, via allosteric rather than competitive inhibition.</text>
</comment>
<comment type="pathway">
    <text evidence="1">Pyrimidine metabolism; CTP biosynthesis via de novo pathway; CTP from UDP: step 2/2.</text>
</comment>
<comment type="subunit">
    <text evidence="1">Homotetramer.</text>
</comment>
<comment type="miscellaneous">
    <text evidence="1">CTPSs have evolved a hybrid strategy for distinguishing between UTP and CTP. The overlapping regions of the product feedback inhibitory and substrate sites recognize a common feature in both compounds, the triphosphate moiety. To differentiate isosteric substrate and product pyrimidine rings, an additional pocket far from the expected kinase/ligase catalytic site, specifically recognizes the cytosine and ribose portions of the product inhibitor.</text>
</comment>
<comment type="similarity">
    <text evidence="1">Belongs to the CTP synthase family.</text>
</comment>
<dbReference type="EC" id="6.3.4.2" evidence="1"/>
<dbReference type="EMBL" id="CU468230">
    <property type="protein sequence ID" value="CAP01365.1"/>
    <property type="molecule type" value="Genomic_DNA"/>
</dbReference>
<dbReference type="SMR" id="B0VQI6"/>
<dbReference type="KEGG" id="abm:ABSDF2034"/>
<dbReference type="HOGENOM" id="CLU_011675_5_0_6"/>
<dbReference type="UniPathway" id="UPA00159">
    <property type="reaction ID" value="UER00277"/>
</dbReference>
<dbReference type="Proteomes" id="UP000001741">
    <property type="component" value="Chromosome"/>
</dbReference>
<dbReference type="GO" id="GO:0005829">
    <property type="term" value="C:cytosol"/>
    <property type="evidence" value="ECO:0007669"/>
    <property type="project" value="TreeGrafter"/>
</dbReference>
<dbReference type="GO" id="GO:0005524">
    <property type="term" value="F:ATP binding"/>
    <property type="evidence" value="ECO:0007669"/>
    <property type="project" value="UniProtKB-KW"/>
</dbReference>
<dbReference type="GO" id="GO:0003883">
    <property type="term" value="F:CTP synthase activity"/>
    <property type="evidence" value="ECO:0007669"/>
    <property type="project" value="UniProtKB-UniRule"/>
</dbReference>
<dbReference type="GO" id="GO:0004359">
    <property type="term" value="F:glutaminase activity"/>
    <property type="evidence" value="ECO:0007669"/>
    <property type="project" value="RHEA"/>
</dbReference>
<dbReference type="GO" id="GO:0042802">
    <property type="term" value="F:identical protein binding"/>
    <property type="evidence" value="ECO:0007669"/>
    <property type="project" value="TreeGrafter"/>
</dbReference>
<dbReference type="GO" id="GO:0046872">
    <property type="term" value="F:metal ion binding"/>
    <property type="evidence" value="ECO:0007669"/>
    <property type="project" value="UniProtKB-KW"/>
</dbReference>
<dbReference type="GO" id="GO:0044210">
    <property type="term" value="P:'de novo' CTP biosynthetic process"/>
    <property type="evidence" value="ECO:0007669"/>
    <property type="project" value="UniProtKB-UniRule"/>
</dbReference>
<dbReference type="GO" id="GO:0019856">
    <property type="term" value="P:pyrimidine nucleobase biosynthetic process"/>
    <property type="evidence" value="ECO:0007669"/>
    <property type="project" value="TreeGrafter"/>
</dbReference>
<dbReference type="CDD" id="cd03113">
    <property type="entry name" value="CTPS_N"/>
    <property type="match status" value="1"/>
</dbReference>
<dbReference type="CDD" id="cd01746">
    <property type="entry name" value="GATase1_CTP_Synthase"/>
    <property type="match status" value="1"/>
</dbReference>
<dbReference type="FunFam" id="3.40.50.300:FF:000009">
    <property type="entry name" value="CTP synthase"/>
    <property type="match status" value="1"/>
</dbReference>
<dbReference type="FunFam" id="3.40.50.880:FF:000002">
    <property type="entry name" value="CTP synthase"/>
    <property type="match status" value="1"/>
</dbReference>
<dbReference type="Gene3D" id="3.40.50.880">
    <property type="match status" value="1"/>
</dbReference>
<dbReference type="Gene3D" id="3.40.50.300">
    <property type="entry name" value="P-loop containing nucleotide triphosphate hydrolases"/>
    <property type="match status" value="1"/>
</dbReference>
<dbReference type="HAMAP" id="MF_01227">
    <property type="entry name" value="PyrG"/>
    <property type="match status" value="1"/>
</dbReference>
<dbReference type="InterPro" id="IPR029062">
    <property type="entry name" value="Class_I_gatase-like"/>
</dbReference>
<dbReference type="InterPro" id="IPR004468">
    <property type="entry name" value="CTP_synthase"/>
</dbReference>
<dbReference type="InterPro" id="IPR017456">
    <property type="entry name" value="CTP_synthase_N"/>
</dbReference>
<dbReference type="InterPro" id="IPR017926">
    <property type="entry name" value="GATASE"/>
</dbReference>
<dbReference type="InterPro" id="IPR033828">
    <property type="entry name" value="GATase1_CTP_Synthase"/>
</dbReference>
<dbReference type="InterPro" id="IPR027417">
    <property type="entry name" value="P-loop_NTPase"/>
</dbReference>
<dbReference type="NCBIfam" id="NF003792">
    <property type="entry name" value="PRK05380.1"/>
    <property type="match status" value="1"/>
</dbReference>
<dbReference type="NCBIfam" id="TIGR00337">
    <property type="entry name" value="PyrG"/>
    <property type="match status" value="1"/>
</dbReference>
<dbReference type="PANTHER" id="PTHR11550">
    <property type="entry name" value="CTP SYNTHASE"/>
    <property type="match status" value="1"/>
</dbReference>
<dbReference type="PANTHER" id="PTHR11550:SF0">
    <property type="entry name" value="CTP SYNTHASE-RELATED"/>
    <property type="match status" value="1"/>
</dbReference>
<dbReference type="Pfam" id="PF06418">
    <property type="entry name" value="CTP_synth_N"/>
    <property type="match status" value="1"/>
</dbReference>
<dbReference type="Pfam" id="PF00117">
    <property type="entry name" value="GATase"/>
    <property type="match status" value="1"/>
</dbReference>
<dbReference type="SUPFAM" id="SSF52317">
    <property type="entry name" value="Class I glutamine amidotransferase-like"/>
    <property type="match status" value="1"/>
</dbReference>
<dbReference type="SUPFAM" id="SSF52540">
    <property type="entry name" value="P-loop containing nucleoside triphosphate hydrolases"/>
    <property type="match status" value="1"/>
</dbReference>
<dbReference type="PROSITE" id="PS51273">
    <property type="entry name" value="GATASE_TYPE_1"/>
    <property type="match status" value="1"/>
</dbReference>
<feature type="chain" id="PRO_1000139358" description="CTP synthase">
    <location>
        <begin position="1"/>
        <end position="545"/>
    </location>
</feature>
<feature type="domain" description="Glutamine amidotransferase type-1" evidence="1">
    <location>
        <begin position="292"/>
        <end position="543"/>
    </location>
</feature>
<feature type="region of interest" description="Amidoligase domain" evidence="1">
    <location>
        <begin position="1"/>
        <end position="266"/>
    </location>
</feature>
<feature type="active site" description="Nucleophile; for glutamine hydrolysis" evidence="1">
    <location>
        <position position="380"/>
    </location>
</feature>
<feature type="active site" evidence="1">
    <location>
        <position position="516"/>
    </location>
</feature>
<feature type="active site" evidence="1">
    <location>
        <position position="518"/>
    </location>
</feature>
<feature type="binding site" evidence="1">
    <location>
        <position position="13"/>
    </location>
    <ligand>
        <name>CTP</name>
        <dbReference type="ChEBI" id="CHEBI:37563"/>
        <note>allosteric inhibitor</note>
    </ligand>
</feature>
<feature type="binding site" evidence="1">
    <location>
        <position position="13"/>
    </location>
    <ligand>
        <name>UTP</name>
        <dbReference type="ChEBI" id="CHEBI:46398"/>
    </ligand>
</feature>
<feature type="binding site" evidence="1">
    <location>
        <begin position="14"/>
        <end position="19"/>
    </location>
    <ligand>
        <name>ATP</name>
        <dbReference type="ChEBI" id="CHEBI:30616"/>
    </ligand>
</feature>
<feature type="binding site" evidence="1">
    <location>
        <position position="71"/>
    </location>
    <ligand>
        <name>ATP</name>
        <dbReference type="ChEBI" id="CHEBI:30616"/>
    </ligand>
</feature>
<feature type="binding site" evidence="1">
    <location>
        <position position="71"/>
    </location>
    <ligand>
        <name>Mg(2+)</name>
        <dbReference type="ChEBI" id="CHEBI:18420"/>
    </ligand>
</feature>
<feature type="binding site" evidence="1">
    <location>
        <position position="140"/>
    </location>
    <ligand>
        <name>Mg(2+)</name>
        <dbReference type="ChEBI" id="CHEBI:18420"/>
    </ligand>
</feature>
<feature type="binding site" evidence="1">
    <location>
        <begin position="147"/>
        <end position="149"/>
    </location>
    <ligand>
        <name>CTP</name>
        <dbReference type="ChEBI" id="CHEBI:37563"/>
        <note>allosteric inhibitor</note>
    </ligand>
</feature>
<feature type="binding site" evidence="1">
    <location>
        <begin position="187"/>
        <end position="192"/>
    </location>
    <ligand>
        <name>CTP</name>
        <dbReference type="ChEBI" id="CHEBI:37563"/>
        <note>allosteric inhibitor</note>
    </ligand>
</feature>
<feature type="binding site" evidence="1">
    <location>
        <begin position="187"/>
        <end position="192"/>
    </location>
    <ligand>
        <name>UTP</name>
        <dbReference type="ChEBI" id="CHEBI:46398"/>
    </ligand>
</feature>
<feature type="binding site" evidence="1">
    <location>
        <position position="223"/>
    </location>
    <ligand>
        <name>CTP</name>
        <dbReference type="ChEBI" id="CHEBI:37563"/>
        <note>allosteric inhibitor</note>
    </ligand>
</feature>
<feature type="binding site" evidence="1">
    <location>
        <position position="223"/>
    </location>
    <ligand>
        <name>UTP</name>
        <dbReference type="ChEBI" id="CHEBI:46398"/>
    </ligand>
</feature>
<feature type="binding site" evidence="1">
    <location>
        <begin position="239"/>
        <end position="241"/>
    </location>
    <ligand>
        <name>ATP</name>
        <dbReference type="ChEBI" id="CHEBI:30616"/>
    </ligand>
</feature>
<feature type="binding site" evidence="1">
    <location>
        <position position="353"/>
    </location>
    <ligand>
        <name>L-glutamine</name>
        <dbReference type="ChEBI" id="CHEBI:58359"/>
    </ligand>
</feature>
<feature type="binding site" evidence="1">
    <location>
        <begin position="381"/>
        <end position="384"/>
    </location>
    <ligand>
        <name>L-glutamine</name>
        <dbReference type="ChEBI" id="CHEBI:58359"/>
    </ligand>
</feature>
<feature type="binding site" evidence="1">
    <location>
        <position position="404"/>
    </location>
    <ligand>
        <name>L-glutamine</name>
        <dbReference type="ChEBI" id="CHEBI:58359"/>
    </ligand>
</feature>
<feature type="binding site" evidence="1">
    <location>
        <position position="471"/>
    </location>
    <ligand>
        <name>L-glutamine</name>
        <dbReference type="ChEBI" id="CHEBI:58359"/>
    </ligand>
</feature>
<accession>B0VQI6</accession>
<keyword id="KW-0067">ATP-binding</keyword>
<keyword id="KW-0315">Glutamine amidotransferase</keyword>
<keyword id="KW-0436">Ligase</keyword>
<keyword id="KW-0460">Magnesium</keyword>
<keyword id="KW-0479">Metal-binding</keyword>
<keyword id="KW-0547">Nucleotide-binding</keyword>
<keyword id="KW-0665">Pyrimidine biosynthesis</keyword>